<comment type="function">
    <text evidence="2">Component of the anaphase promoting complex/cyclosome (APC/C), a cell cycle-regulated E3 ubiquitin-protein ligase complex that controls progression through mitosis and the G1 phase of the cell cycle. The APC/C is thought to confer substrate specificity and, in the presence of ubiquitin-conjugating E2 enzymes, it catalyzes the formation of protein-ubiquitin conjugates that are subsequently degraded by the 26S proteasome.</text>
</comment>
<comment type="subunit">
    <text evidence="2">The APC/C is composed of at least 13 subunits: apc1, apc2, nuc2, apc4, apc5, cut9, apc8, apc10, apc11, hcn1, apc13, apc14 and apc15.</text>
</comment>
<comment type="interaction">
    <interactant intactId="EBI-1251604">
        <id>O94688</id>
    </interactant>
    <interactant intactId="EBI-1251583">
        <id>O74358</id>
        <label>apc13</label>
    </interactant>
    <organismsDiffer>false</organismsDiffer>
    <experiments>3</experiments>
</comment>
<comment type="interaction">
    <interactant intactId="EBI-1251604">
        <id>O94688</id>
    </interactant>
    <interactant intactId="EBI-1251592">
        <id>O42659</id>
        <label>apc14</label>
    </interactant>
    <organismsDiffer>false</organismsDiffer>
    <experiments>2</experiments>
</comment>
<comment type="interaction">
    <interactant intactId="EBI-1251604">
        <id>O94688</id>
    </interactant>
    <interactant intactId="EBI-1160859">
        <id>P41889</id>
        <label>cut9</label>
    </interactant>
    <organismsDiffer>false</organismsDiffer>
    <experiments>2</experiments>
</comment>
<comment type="similarity">
    <text evidence="3">Belongs to the APC15 family.</text>
</comment>
<keyword id="KW-0131">Cell cycle</keyword>
<keyword id="KW-0132">Cell division</keyword>
<keyword id="KW-0498">Mitosis</keyword>
<keyword id="KW-1185">Reference proteome</keyword>
<keyword id="KW-0833">Ubl conjugation pathway</keyword>
<gene>
    <name type="primary">apc15</name>
    <name type="ORF">SPBC83.04</name>
</gene>
<protein>
    <recommendedName>
        <fullName>Anaphase-promoting complex subunit 15</fullName>
    </recommendedName>
    <alternativeName>
        <fullName>20S cyclosome/APC complex protein apc15</fullName>
    </alternativeName>
</protein>
<evidence type="ECO:0000256" key="1">
    <source>
        <dbReference type="SAM" id="MobiDB-lite"/>
    </source>
</evidence>
<evidence type="ECO:0000269" key="2">
    <source>
    </source>
</evidence>
<evidence type="ECO:0000305" key="3"/>
<feature type="chain" id="PRO_0000237685" description="Anaphase-promoting complex subunit 15">
    <location>
        <begin position="1"/>
        <end position="136"/>
    </location>
</feature>
<feature type="region of interest" description="Disordered" evidence="1">
    <location>
        <begin position="57"/>
        <end position="119"/>
    </location>
</feature>
<feature type="compositionally biased region" description="Acidic residues" evidence="1">
    <location>
        <begin position="61"/>
        <end position="82"/>
    </location>
</feature>
<feature type="compositionally biased region" description="Acidic residues" evidence="1">
    <location>
        <begin position="89"/>
        <end position="115"/>
    </location>
</feature>
<sequence>MSFMSLMANTAHQLWYPTSFPSMKELEKEEVRLETQELAIKQFGFRTIRPIGLNRSMQEQLDLEEQEREEANQDTELDEEELGSGSFPEEGEMDDMDGDNEEVEDHDIEEVDLDADITNADASEFYEDISEYGFQN</sequence>
<proteinExistence type="evidence at protein level"/>
<dbReference type="EMBL" id="CU329671">
    <property type="protein sequence ID" value="CAB36866.1"/>
    <property type="molecule type" value="Genomic_DNA"/>
</dbReference>
<dbReference type="PIR" id="T40693">
    <property type="entry name" value="T40693"/>
</dbReference>
<dbReference type="RefSeq" id="NP_595636.1">
    <property type="nucleotide sequence ID" value="NM_001021530.2"/>
</dbReference>
<dbReference type="BioGRID" id="277180">
    <property type="interactions" value="7"/>
</dbReference>
<dbReference type="ComplexPortal" id="CPX-763">
    <property type="entry name" value="Anaphase-promoting complex"/>
</dbReference>
<dbReference type="ComplexPortal" id="CPX-764">
    <property type="entry name" value="Anaphase-promoting complex, slp1 variant"/>
</dbReference>
<dbReference type="ComplexPortal" id="CPX-765">
    <property type="entry name" value="Anaphase-promoting complex, srw1 variant"/>
</dbReference>
<dbReference type="ComplexPortal" id="CPX-766">
    <property type="entry name" value="Anaphase-promoting complex, mfr1 variant"/>
</dbReference>
<dbReference type="FunCoup" id="O94688">
    <property type="interactions" value="15"/>
</dbReference>
<dbReference type="IntAct" id="O94688">
    <property type="interactions" value="4"/>
</dbReference>
<dbReference type="STRING" id="284812.O94688"/>
<dbReference type="PaxDb" id="4896-SPBC83.04.1"/>
<dbReference type="EnsemblFungi" id="SPBC83.04.1">
    <property type="protein sequence ID" value="SPBC83.04.1:pep"/>
    <property type="gene ID" value="SPBC83.04"/>
</dbReference>
<dbReference type="GeneID" id="2540655"/>
<dbReference type="KEGG" id="spo:2540655"/>
<dbReference type="PomBase" id="SPBC83.04">
    <property type="gene designation" value="apc15"/>
</dbReference>
<dbReference type="VEuPathDB" id="FungiDB:SPBC83.04"/>
<dbReference type="eggNOG" id="ENOG502SGKU">
    <property type="taxonomic scope" value="Eukaryota"/>
</dbReference>
<dbReference type="HOGENOM" id="CLU_1876627_0_0_1"/>
<dbReference type="InParanoid" id="O94688"/>
<dbReference type="OMA" id="TAHELWY"/>
<dbReference type="PRO" id="PR:O94688"/>
<dbReference type="Proteomes" id="UP000002485">
    <property type="component" value="Chromosome II"/>
</dbReference>
<dbReference type="GO" id="GO:0005680">
    <property type="term" value="C:anaphase-promoting complex"/>
    <property type="evidence" value="ECO:0000314"/>
    <property type="project" value="PomBase"/>
</dbReference>
<dbReference type="GO" id="GO:0005829">
    <property type="term" value="C:cytosol"/>
    <property type="evidence" value="ECO:0007005"/>
    <property type="project" value="PomBase"/>
</dbReference>
<dbReference type="GO" id="GO:0005634">
    <property type="term" value="C:nucleus"/>
    <property type="evidence" value="ECO:0000269"/>
    <property type="project" value="PomBase"/>
</dbReference>
<dbReference type="GO" id="GO:0031145">
    <property type="term" value="P:anaphase-promoting complex-dependent catabolic process"/>
    <property type="evidence" value="ECO:0000315"/>
    <property type="project" value="PomBase"/>
</dbReference>
<dbReference type="GO" id="GO:0051301">
    <property type="term" value="P:cell division"/>
    <property type="evidence" value="ECO:0007669"/>
    <property type="project" value="UniProtKB-KW"/>
</dbReference>
<dbReference type="InterPro" id="IPR008402">
    <property type="entry name" value="APC_su15/mnd2"/>
</dbReference>
<dbReference type="Pfam" id="PF05841">
    <property type="entry name" value="Apc15p"/>
    <property type="match status" value="1"/>
</dbReference>
<name>APC15_SCHPO</name>
<organism>
    <name type="scientific">Schizosaccharomyces pombe (strain 972 / ATCC 24843)</name>
    <name type="common">Fission yeast</name>
    <dbReference type="NCBI Taxonomy" id="284812"/>
    <lineage>
        <taxon>Eukaryota</taxon>
        <taxon>Fungi</taxon>
        <taxon>Dikarya</taxon>
        <taxon>Ascomycota</taxon>
        <taxon>Taphrinomycotina</taxon>
        <taxon>Schizosaccharomycetes</taxon>
        <taxon>Schizosaccharomycetales</taxon>
        <taxon>Schizosaccharomycetaceae</taxon>
        <taxon>Schizosaccharomyces</taxon>
    </lineage>
</organism>
<accession>O94688</accession>
<reference key="1">
    <citation type="journal article" date="2002" name="Nature">
        <title>The genome sequence of Schizosaccharomyces pombe.</title>
        <authorList>
            <person name="Wood V."/>
            <person name="Gwilliam R."/>
            <person name="Rajandream M.A."/>
            <person name="Lyne M.H."/>
            <person name="Lyne R."/>
            <person name="Stewart A."/>
            <person name="Sgouros J.G."/>
            <person name="Peat N."/>
            <person name="Hayles J."/>
            <person name="Baker S.G."/>
            <person name="Basham D."/>
            <person name="Bowman S."/>
            <person name="Brooks K."/>
            <person name="Brown D."/>
            <person name="Brown S."/>
            <person name="Chillingworth T."/>
            <person name="Churcher C.M."/>
            <person name="Collins M."/>
            <person name="Connor R."/>
            <person name="Cronin A."/>
            <person name="Davis P."/>
            <person name="Feltwell T."/>
            <person name="Fraser A."/>
            <person name="Gentles S."/>
            <person name="Goble A."/>
            <person name="Hamlin N."/>
            <person name="Harris D.E."/>
            <person name="Hidalgo J."/>
            <person name="Hodgson G."/>
            <person name="Holroyd S."/>
            <person name="Hornsby T."/>
            <person name="Howarth S."/>
            <person name="Huckle E.J."/>
            <person name="Hunt S."/>
            <person name="Jagels K."/>
            <person name="James K.D."/>
            <person name="Jones L."/>
            <person name="Jones M."/>
            <person name="Leather S."/>
            <person name="McDonald S."/>
            <person name="McLean J."/>
            <person name="Mooney P."/>
            <person name="Moule S."/>
            <person name="Mungall K.L."/>
            <person name="Murphy L.D."/>
            <person name="Niblett D."/>
            <person name="Odell C."/>
            <person name="Oliver K."/>
            <person name="O'Neil S."/>
            <person name="Pearson D."/>
            <person name="Quail M.A."/>
            <person name="Rabbinowitsch E."/>
            <person name="Rutherford K.M."/>
            <person name="Rutter S."/>
            <person name="Saunders D."/>
            <person name="Seeger K."/>
            <person name="Sharp S."/>
            <person name="Skelton J."/>
            <person name="Simmonds M.N."/>
            <person name="Squares R."/>
            <person name="Squares S."/>
            <person name="Stevens K."/>
            <person name="Taylor K."/>
            <person name="Taylor R.G."/>
            <person name="Tivey A."/>
            <person name="Walsh S.V."/>
            <person name="Warren T."/>
            <person name="Whitehead S."/>
            <person name="Woodward J.R."/>
            <person name="Volckaert G."/>
            <person name="Aert R."/>
            <person name="Robben J."/>
            <person name="Grymonprez B."/>
            <person name="Weltjens I."/>
            <person name="Vanstreels E."/>
            <person name="Rieger M."/>
            <person name="Schaefer M."/>
            <person name="Mueller-Auer S."/>
            <person name="Gabel C."/>
            <person name="Fuchs M."/>
            <person name="Duesterhoeft A."/>
            <person name="Fritzc C."/>
            <person name="Holzer E."/>
            <person name="Moestl D."/>
            <person name="Hilbert H."/>
            <person name="Borzym K."/>
            <person name="Langer I."/>
            <person name="Beck A."/>
            <person name="Lehrach H."/>
            <person name="Reinhardt R."/>
            <person name="Pohl T.M."/>
            <person name="Eger P."/>
            <person name="Zimmermann W."/>
            <person name="Wedler H."/>
            <person name="Wambutt R."/>
            <person name="Purnelle B."/>
            <person name="Goffeau A."/>
            <person name="Cadieu E."/>
            <person name="Dreano S."/>
            <person name="Gloux S."/>
            <person name="Lelaure V."/>
            <person name="Mottier S."/>
            <person name="Galibert F."/>
            <person name="Aves S.J."/>
            <person name="Xiang Z."/>
            <person name="Hunt C."/>
            <person name="Moore K."/>
            <person name="Hurst S.M."/>
            <person name="Lucas M."/>
            <person name="Rochet M."/>
            <person name="Gaillardin C."/>
            <person name="Tallada V.A."/>
            <person name="Garzon A."/>
            <person name="Thode G."/>
            <person name="Daga R.R."/>
            <person name="Cruzado L."/>
            <person name="Jimenez J."/>
            <person name="Sanchez M."/>
            <person name="del Rey F."/>
            <person name="Benito J."/>
            <person name="Dominguez A."/>
            <person name="Revuelta J.L."/>
            <person name="Moreno S."/>
            <person name="Armstrong J."/>
            <person name="Forsburg S.L."/>
            <person name="Cerutti L."/>
            <person name="Lowe T."/>
            <person name="McCombie W.R."/>
            <person name="Paulsen I."/>
            <person name="Potashkin J."/>
            <person name="Shpakovski G.V."/>
            <person name="Ussery D."/>
            <person name="Barrell B.G."/>
            <person name="Nurse P."/>
        </authorList>
    </citation>
    <scope>NUCLEOTIDE SEQUENCE [LARGE SCALE GENOMIC DNA]</scope>
    <source>
        <strain>972 / ATCC 24843</strain>
    </source>
</reference>
<reference key="2">
    <citation type="journal article" date="2002" name="Curr. Biol.">
        <title>Proteomics analysis identifies new components of the fission and budding yeast anaphase-promoting complexes.</title>
        <authorList>
            <person name="Yoon H.-J."/>
            <person name="Feoktistova A."/>
            <person name="Wolfe B.A."/>
            <person name="Jennings J.L."/>
            <person name="Link A.J."/>
            <person name="Gould K.L."/>
        </authorList>
    </citation>
    <scope>FUNCTION</scope>
    <scope>SUBUNIT</scope>
</reference>